<accession>Q94726</accession>
<feature type="chain" id="PRO_0000307825" description="Caltractin ICL1d">
    <location>
        <begin position="1"/>
        <end position="181"/>
    </location>
</feature>
<feature type="domain" description="EF-hand 1" evidence="2">
    <location>
        <begin position="37"/>
        <end position="72"/>
    </location>
</feature>
<feature type="domain" description="EF-hand 2" evidence="2">
    <location>
        <begin position="73"/>
        <end position="108"/>
    </location>
</feature>
<feature type="domain" description="EF-hand 3" evidence="2">
    <location>
        <begin position="110"/>
        <end position="145"/>
    </location>
</feature>
<feature type="domain" description="EF-hand 4" evidence="2">
    <location>
        <begin position="146"/>
        <end position="181"/>
    </location>
</feature>
<feature type="region of interest" description="Disordered" evidence="3">
    <location>
        <begin position="1"/>
        <end position="29"/>
    </location>
</feature>
<feature type="binding site" evidence="2">
    <location>
        <position position="50"/>
    </location>
    <ligand>
        <name>Ca(2+)</name>
        <dbReference type="ChEBI" id="CHEBI:29108"/>
        <label>1</label>
    </ligand>
</feature>
<feature type="binding site" evidence="2">
    <location>
        <position position="52"/>
    </location>
    <ligand>
        <name>Ca(2+)</name>
        <dbReference type="ChEBI" id="CHEBI:29108"/>
        <label>1</label>
    </ligand>
</feature>
<feature type="binding site" evidence="2">
    <location>
        <position position="54"/>
    </location>
    <ligand>
        <name>Ca(2+)</name>
        <dbReference type="ChEBI" id="CHEBI:29108"/>
        <label>1</label>
    </ligand>
</feature>
<feature type="binding site" evidence="2">
    <location>
        <position position="56"/>
    </location>
    <ligand>
        <name>Ca(2+)</name>
        <dbReference type="ChEBI" id="CHEBI:29108"/>
        <label>1</label>
    </ligand>
</feature>
<feature type="binding site" evidence="2">
    <location>
        <position position="61"/>
    </location>
    <ligand>
        <name>Ca(2+)</name>
        <dbReference type="ChEBI" id="CHEBI:29108"/>
        <label>1</label>
    </ligand>
</feature>
<feature type="binding site" evidence="2">
    <location>
        <position position="86"/>
    </location>
    <ligand>
        <name>Ca(2+)</name>
        <dbReference type="ChEBI" id="CHEBI:29108"/>
        <label>2</label>
    </ligand>
</feature>
<feature type="binding site" evidence="2">
    <location>
        <position position="88"/>
    </location>
    <ligand>
        <name>Ca(2+)</name>
        <dbReference type="ChEBI" id="CHEBI:29108"/>
        <label>2</label>
    </ligand>
</feature>
<feature type="binding site" evidence="2">
    <location>
        <position position="90"/>
    </location>
    <ligand>
        <name>Ca(2+)</name>
        <dbReference type="ChEBI" id="CHEBI:29108"/>
        <label>2</label>
    </ligand>
</feature>
<feature type="binding site" evidence="2">
    <location>
        <position position="92"/>
    </location>
    <ligand>
        <name>Ca(2+)</name>
        <dbReference type="ChEBI" id="CHEBI:29108"/>
        <label>2</label>
    </ligand>
</feature>
<feature type="binding site" evidence="2">
    <location>
        <position position="97"/>
    </location>
    <ligand>
        <name>Ca(2+)</name>
        <dbReference type="ChEBI" id="CHEBI:29108"/>
        <label>2</label>
    </ligand>
</feature>
<proteinExistence type="inferred from homology"/>
<keyword id="KW-0106">Calcium</keyword>
<keyword id="KW-0963">Cytoplasm</keyword>
<keyword id="KW-0206">Cytoskeleton</keyword>
<keyword id="KW-0479">Metal-binding</keyword>
<keyword id="KW-1185">Reference proteome</keyword>
<keyword id="KW-0677">Repeat</keyword>
<gene>
    <name type="primary">Icl1d</name>
    <name type="ORF">GSPATT00031615001</name>
</gene>
<dbReference type="EMBL" id="U76540">
    <property type="protein sequence ID" value="AAC47490.1"/>
    <property type="molecule type" value="Genomic_DNA"/>
</dbReference>
<dbReference type="EMBL" id="CR932079">
    <property type="protein sequence ID" value="CAI38919.1"/>
    <property type="molecule type" value="Genomic_DNA"/>
</dbReference>
<dbReference type="EMBL" id="CT868013">
    <property type="protein sequence ID" value="CAK61384.1"/>
    <property type="molecule type" value="Genomic_DNA"/>
</dbReference>
<dbReference type="RefSeq" id="XP_001428782.1">
    <property type="nucleotide sequence ID" value="XM_001428745.1"/>
</dbReference>
<dbReference type="SMR" id="Q94726"/>
<dbReference type="STRING" id="5888.Q94726"/>
<dbReference type="EnsemblProtists" id="CAK61384">
    <property type="protein sequence ID" value="CAK61384"/>
    <property type="gene ID" value="GSPATT00031615001"/>
</dbReference>
<dbReference type="GeneID" id="5014566"/>
<dbReference type="KEGG" id="ptm:GSPATT00031615001"/>
<dbReference type="eggNOG" id="KOG0028">
    <property type="taxonomic scope" value="Eukaryota"/>
</dbReference>
<dbReference type="HOGENOM" id="CLU_061288_18_2_1"/>
<dbReference type="InParanoid" id="Q94726"/>
<dbReference type="OMA" id="NDFKIAM"/>
<dbReference type="OrthoDB" id="410571at2759"/>
<dbReference type="Proteomes" id="UP000000600">
    <property type="component" value="Partially assembled WGS sequence"/>
</dbReference>
<dbReference type="GO" id="GO:0005737">
    <property type="term" value="C:cytoplasm"/>
    <property type="evidence" value="ECO:0007669"/>
    <property type="project" value="UniProtKB-KW"/>
</dbReference>
<dbReference type="GO" id="GO:0005856">
    <property type="term" value="C:cytoskeleton"/>
    <property type="evidence" value="ECO:0007669"/>
    <property type="project" value="UniProtKB-SubCell"/>
</dbReference>
<dbReference type="GO" id="GO:0005509">
    <property type="term" value="F:calcium ion binding"/>
    <property type="evidence" value="ECO:0007669"/>
    <property type="project" value="InterPro"/>
</dbReference>
<dbReference type="CDD" id="cd00051">
    <property type="entry name" value="EFh"/>
    <property type="match status" value="1"/>
</dbReference>
<dbReference type="FunFam" id="1.10.238.10:FF:000178">
    <property type="entry name" value="Calmodulin-2 A"/>
    <property type="match status" value="1"/>
</dbReference>
<dbReference type="Gene3D" id="1.10.238.10">
    <property type="entry name" value="EF-hand"/>
    <property type="match status" value="2"/>
</dbReference>
<dbReference type="InterPro" id="IPR050230">
    <property type="entry name" value="CALM/Myosin/TropC-like"/>
</dbReference>
<dbReference type="InterPro" id="IPR011992">
    <property type="entry name" value="EF-hand-dom_pair"/>
</dbReference>
<dbReference type="InterPro" id="IPR018247">
    <property type="entry name" value="EF_Hand_1_Ca_BS"/>
</dbReference>
<dbReference type="InterPro" id="IPR002048">
    <property type="entry name" value="EF_hand_dom"/>
</dbReference>
<dbReference type="PANTHER" id="PTHR23048:SF59">
    <property type="entry name" value="EF-HAND SUPERFAMILY PROTEIN"/>
    <property type="match status" value="1"/>
</dbReference>
<dbReference type="PANTHER" id="PTHR23048">
    <property type="entry name" value="MYOSIN LIGHT CHAIN 1, 3"/>
    <property type="match status" value="1"/>
</dbReference>
<dbReference type="Pfam" id="PF13499">
    <property type="entry name" value="EF-hand_7"/>
    <property type="match status" value="2"/>
</dbReference>
<dbReference type="SMART" id="SM00054">
    <property type="entry name" value="EFh"/>
    <property type="match status" value="4"/>
</dbReference>
<dbReference type="SUPFAM" id="SSF47473">
    <property type="entry name" value="EF-hand"/>
    <property type="match status" value="1"/>
</dbReference>
<dbReference type="PROSITE" id="PS00018">
    <property type="entry name" value="EF_HAND_1"/>
    <property type="match status" value="2"/>
</dbReference>
<dbReference type="PROSITE" id="PS50222">
    <property type="entry name" value="EF_HAND_2"/>
    <property type="match status" value="4"/>
</dbReference>
<organism>
    <name type="scientific">Paramecium tetraurelia</name>
    <dbReference type="NCBI Taxonomy" id="5888"/>
    <lineage>
        <taxon>Eukaryota</taxon>
        <taxon>Sar</taxon>
        <taxon>Alveolata</taxon>
        <taxon>Ciliophora</taxon>
        <taxon>Intramacronucleata</taxon>
        <taxon>Oligohymenophorea</taxon>
        <taxon>Peniculida</taxon>
        <taxon>Parameciidae</taxon>
        <taxon>Paramecium</taxon>
    </lineage>
</organism>
<evidence type="ECO:0000250" key="1"/>
<evidence type="ECO:0000255" key="2">
    <source>
        <dbReference type="PROSITE-ProRule" id="PRU00448"/>
    </source>
</evidence>
<evidence type="ECO:0000256" key="3">
    <source>
        <dbReference type="SAM" id="MobiDB-lite"/>
    </source>
</evidence>
<evidence type="ECO:0000305" key="4"/>
<protein>
    <recommendedName>
        <fullName>Caltractin ICL1d</fullName>
    </recommendedName>
    <alternativeName>
        <fullName>Centrin-4</fullName>
    </alternativeName>
</protein>
<reference key="1">
    <citation type="journal article" date="1997" name="Nucleic Acids Res.">
        <title>Characterization of multigene families in the micronuclear genome of Paramecium tetraurelia reveals a germline specific sequence in an intron of a centrin gene.</title>
        <authorList>
            <person name="Vayssie L."/>
            <person name="Sperling L."/>
            <person name="Madeddu L."/>
        </authorList>
    </citation>
    <scope>NUCLEOTIDE SEQUENCE [GENOMIC DNA]</scope>
</reference>
<reference key="2">
    <citation type="submission" date="2005-09" db="EMBL/GenBank/DDBJ databases">
        <title>Paramecium tetraurelia centrin-related protein genes.</title>
        <authorList>
            <person name="Klotz C."/>
        </authorList>
    </citation>
    <scope>NUCLEOTIDE SEQUENCE [GENOMIC DNA]</scope>
    <source>
        <strain>Stock d4-2</strain>
    </source>
</reference>
<reference key="3">
    <citation type="journal article" date="2006" name="Nature">
        <title>Global trends of whole-genome duplications revealed by the ciliate Paramecium tetraurelia.</title>
        <authorList>
            <person name="Aury J.-M."/>
            <person name="Jaillon O."/>
            <person name="Duret L."/>
            <person name="Noel B."/>
            <person name="Jubin C."/>
            <person name="Porcel B.M."/>
            <person name="Segurens B."/>
            <person name="Daubin V."/>
            <person name="Anthouard V."/>
            <person name="Aiach N."/>
            <person name="Arnaiz O."/>
            <person name="Billaut A."/>
            <person name="Beisson J."/>
            <person name="Blanc I."/>
            <person name="Bouhouche K."/>
            <person name="Camara F."/>
            <person name="Duharcourt S."/>
            <person name="Guigo R."/>
            <person name="Gogendeau D."/>
            <person name="Katinka M."/>
            <person name="Keller A.-M."/>
            <person name="Kissmehl R."/>
            <person name="Klotz C."/>
            <person name="Koll F."/>
            <person name="Le Mouel A."/>
            <person name="Lepere G."/>
            <person name="Malinsky S."/>
            <person name="Nowacki M."/>
            <person name="Nowak J.K."/>
            <person name="Plattner H."/>
            <person name="Poulain J."/>
            <person name="Ruiz F."/>
            <person name="Serrano V."/>
            <person name="Zagulski M."/>
            <person name="Dessen P."/>
            <person name="Betermier M."/>
            <person name="Weissenbach J."/>
            <person name="Scarpelli C."/>
            <person name="Schaechter V."/>
            <person name="Sperling L."/>
            <person name="Meyer E."/>
            <person name="Cohen J."/>
            <person name="Wincker P."/>
        </authorList>
    </citation>
    <scope>NUCLEOTIDE SEQUENCE [LARGE SCALE GENOMIC DNA]</scope>
    <source>
        <strain>Stock d4-2</strain>
    </source>
</reference>
<sequence length="181" mass="20314">MARRGQQPPPQQAPPAQKNQTGKFNPAEFVKPGLTEEEVLEIKEAFDLFDTDGTQSIDPKELKAAMTSLGFEAKNQTIYQMISDLDTDGSGQIDFAEFLKLMTARISERDSKADIQKVFNLFDSERAGVITLKDLRKVAKELGETMDDSELQEMIDRADSDGDAQVTFEDFYNIMTKKTFA</sequence>
<comment type="function">
    <text evidence="1">Plays a fundamental role in microtubule organizing center structure and function. Component of the infraciliary lattice (ICL) and the ciliary basal bodies (By similarity).</text>
</comment>
<comment type="subunit">
    <text evidence="1">Monomer.</text>
</comment>
<comment type="subcellular location">
    <subcellularLocation>
        <location evidence="1">Cytoplasm</location>
        <location evidence="1">Cytoskeleton</location>
    </subcellularLocation>
    <text evidence="1">ICL, innermost fibrous network of the cortical cytoskeleton.</text>
</comment>
<comment type="similarity">
    <text evidence="4">Belongs to the centrin family.</text>
</comment>
<name>CATR4_PARTE</name>